<accession>Q9ERA9</accession>
<reference key="1">
    <citation type="submission" date="2000-10" db="EMBL/GenBank/DDBJ databases">
        <title>Characterization of the mouse torsinA gene.</title>
        <authorList>
            <person name="Kuner R."/>
            <person name="Teismann P."/>
            <person name="Trutzel A."/>
            <person name="Naim J."/>
            <person name="Richter A."/>
            <person name="Bach A."/>
            <person name="Ferger B."/>
            <person name="Schneider A."/>
        </authorList>
    </citation>
    <scope>NUCLEOTIDE SEQUENCE [MRNA]</scope>
    <source>
        <tissue>Brain</tissue>
    </source>
</reference>
<evidence type="ECO:0000250" key="1"/>
<evidence type="ECO:0000255" key="2"/>
<evidence type="ECO:0000305" key="3"/>
<gene>
    <name type="primary">TOR1A</name>
    <name type="synonym">DYT1</name>
</gene>
<comment type="function">
    <text evidence="1">Protein with chaperone functions important for the control of protein folding, processing, stability and localization as well as for the reduction of misfolded protein aggregates. Involved in the regulation of synaptic vesicle recycling, controls STON2 protein stability in collaboration with the COP9 signalosome complex (CSN). In the nucleus, may link the cytoskeleton with the nuclear envelope, this mechanism seems to be crucial for the control of nuclear polarity, cell movement and, specifically in neurons, nuclear envelope integrity. Participates in the cellular trafficking and may regulate the subcellular location of multipass membrane proteins such as the dopamine transporter SLC6A3, leading to the modulation of dopamine neurotransmission. In the endoplasmic reticulum, plays a role in the quality control of protein folding by increasing clearance of misfolded proteins such as SGCE variants or holding them in an intermediate state for proper refolding. May have a redundant function with TOR1B in non-neural tissues (By similarity).</text>
</comment>
<comment type="catalytic activity">
    <reaction>
        <text>ATP + H2O = ADP + phosphate + H(+)</text>
        <dbReference type="Rhea" id="RHEA:13065"/>
        <dbReference type="ChEBI" id="CHEBI:15377"/>
        <dbReference type="ChEBI" id="CHEBI:15378"/>
        <dbReference type="ChEBI" id="CHEBI:30616"/>
        <dbReference type="ChEBI" id="CHEBI:43474"/>
        <dbReference type="ChEBI" id="CHEBI:456216"/>
    </reaction>
</comment>
<comment type="subunit">
    <text evidence="1">Homohexamer. Interacts with TOR1B; the interaction may be specific of neural tissues. Interacts (ATP-bound) with TOR1AIP1 and TOR1AIP2; the interactions induce ATPase activity. Interacts with KLHL14; preferentially when ATP-free. Interacts with KLC1 (via TPR repeats); the interaction associates TOR1A with the kinesin oligomeric complex. Interacts with COPS4; the interaction associates TOR1A with the CSN complex. Interacts with SNAPIN; the interaction is direct and associates SNAPIN with the CSN complex. Interacts with STON2. Interacts (ATP-bound) with SYNE3 (via KASH domain); the interaction is required for SYNE3 nuclear envelope localization. Interacts with VIM; the interaction associates TOR1A with the cytoskeleton. Interacts with PLEC. Interacts (ATP-bound) with SLC6A3; regulates SLC6A3 transport to the plasma membrane (By similarity).</text>
</comment>
<comment type="subcellular location">
    <subcellularLocation>
        <location evidence="1">Endoplasmic reticulum lumen</location>
    </subcellularLocation>
    <subcellularLocation>
        <location evidence="1">Nucleus membrane</location>
        <topology evidence="1">Peripheral membrane protein</topology>
    </subcellularLocation>
    <subcellularLocation>
        <location evidence="1">Cell projection</location>
        <location evidence="1">Growth cone</location>
    </subcellularLocation>
    <subcellularLocation>
        <location evidence="1">Cytoplasmic vesicle membrane</location>
    </subcellularLocation>
    <subcellularLocation>
        <location evidence="1">Synapse</location>
        <location evidence="1">Synaptosome</location>
    </subcellularLocation>
    <subcellularLocation>
        <location evidence="1">Cytoplasm</location>
        <location evidence="1">Cytoskeleton</location>
    </subcellularLocation>
    <text evidence="1">Mainly located in the lumen of the endoplasmic reticulum. Peripherally associated with the inner face of the ER membrane, probably mediated by the interaction with TOR1AIP1. The association with nucleus membrane is mediated by the interaction with TOR1AIP2 (By similarity).</text>
</comment>
<comment type="PTM">
    <text evidence="1">N-glycosylated.</text>
</comment>
<comment type="similarity">
    <text evidence="3">Belongs to the ClpA/ClpB family. Torsin subfamily.</text>
</comment>
<name>TOR1A_CRICR</name>
<feature type="chain" id="PRO_0000191242" description="Torsin-1A">
    <location>
        <begin position="1" status="less than"/>
        <end position="273" status="greater than"/>
    </location>
</feature>
<feature type="region of interest" description="Interaction with SNAPIN" evidence="1">
    <location>
        <begin position="45"/>
        <end position="205"/>
    </location>
</feature>
<feature type="binding site" evidence="2">
    <location>
        <begin position="56"/>
        <end position="63"/>
    </location>
    <ligand>
        <name>ATP</name>
        <dbReference type="ChEBI" id="CHEBI:30616"/>
    </ligand>
</feature>
<feature type="glycosylation site" description="N-linked (GlcNAc...) asparagine" evidence="1">
    <location>
        <position position="97"/>
    </location>
</feature>
<feature type="glycosylation site" description="N-linked (GlcNAc...) asparagine" evidence="1">
    <location>
        <position position="112"/>
    </location>
</feature>
<feature type="non-terminal residue">
    <location>
        <position position="1"/>
    </location>
</feature>
<feature type="non-terminal residue">
    <location>
        <position position="273"/>
    </location>
</feature>
<organism>
    <name type="scientific">Cricetus cricetus</name>
    <name type="common">Black-bellied hamster</name>
    <dbReference type="NCBI Taxonomy" id="10034"/>
    <lineage>
        <taxon>Eukaryota</taxon>
        <taxon>Metazoa</taxon>
        <taxon>Chordata</taxon>
        <taxon>Craniata</taxon>
        <taxon>Vertebrata</taxon>
        <taxon>Euteleostomi</taxon>
        <taxon>Mammalia</taxon>
        <taxon>Eutheria</taxon>
        <taxon>Euarchontoglires</taxon>
        <taxon>Glires</taxon>
        <taxon>Rodentia</taxon>
        <taxon>Myomorpha</taxon>
        <taxon>Muroidea</taxon>
        <taxon>Cricetidae</taxon>
        <taxon>Cricetinae</taxon>
        <taxon>Cricetus</taxon>
    </lineage>
</organism>
<dbReference type="EC" id="3.6.4.-"/>
<dbReference type="EMBL" id="AJ298842">
    <property type="protein sequence ID" value="CAC12784.1"/>
    <property type="molecule type" value="mRNA"/>
</dbReference>
<dbReference type="SMR" id="Q9ERA9"/>
<dbReference type="GlyCosmos" id="Q9ERA9">
    <property type="glycosylation" value="2 sites, No reported glycans"/>
</dbReference>
<dbReference type="GO" id="GO:0030659">
    <property type="term" value="C:cytoplasmic vesicle membrane"/>
    <property type="evidence" value="ECO:0007669"/>
    <property type="project" value="UniProtKB-SubCell"/>
</dbReference>
<dbReference type="GO" id="GO:0005856">
    <property type="term" value="C:cytoskeleton"/>
    <property type="evidence" value="ECO:0007669"/>
    <property type="project" value="UniProtKB-SubCell"/>
</dbReference>
<dbReference type="GO" id="GO:0005788">
    <property type="term" value="C:endoplasmic reticulum lumen"/>
    <property type="evidence" value="ECO:0000250"/>
    <property type="project" value="UniProtKB"/>
</dbReference>
<dbReference type="GO" id="GO:0005789">
    <property type="term" value="C:endoplasmic reticulum membrane"/>
    <property type="evidence" value="ECO:0000250"/>
    <property type="project" value="UniProtKB"/>
</dbReference>
<dbReference type="GO" id="GO:0030426">
    <property type="term" value="C:growth cone"/>
    <property type="evidence" value="ECO:0000250"/>
    <property type="project" value="UniProtKB"/>
</dbReference>
<dbReference type="GO" id="GO:0005635">
    <property type="term" value="C:nuclear envelope"/>
    <property type="evidence" value="ECO:0000250"/>
    <property type="project" value="UniProtKB"/>
</dbReference>
<dbReference type="GO" id="GO:0031965">
    <property type="term" value="C:nuclear membrane"/>
    <property type="evidence" value="ECO:0007669"/>
    <property type="project" value="UniProtKB-SubCell"/>
</dbReference>
<dbReference type="GO" id="GO:0030141">
    <property type="term" value="C:secretory granule"/>
    <property type="evidence" value="ECO:0000250"/>
    <property type="project" value="UniProtKB"/>
</dbReference>
<dbReference type="GO" id="GO:0008021">
    <property type="term" value="C:synaptic vesicle"/>
    <property type="evidence" value="ECO:0000250"/>
    <property type="project" value="UniProtKB"/>
</dbReference>
<dbReference type="GO" id="GO:0005524">
    <property type="term" value="F:ATP binding"/>
    <property type="evidence" value="ECO:0007669"/>
    <property type="project" value="UniProtKB-KW"/>
</dbReference>
<dbReference type="GO" id="GO:0016887">
    <property type="term" value="F:ATP hydrolysis activity"/>
    <property type="evidence" value="ECO:0000250"/>
    <property type="project" value="UniProtKB"/>
</dbReference>
<dbReference type="GO" id="GO:0140662">
    <property type="term" value="F:ATP-dependent protein folding chaperone"/>
    <property type="evidence" value="ECO:0000250"/>
    <property type="project" value="UniProtKB"/>
</dbReference>
<dbReference type="GO" id="GO:0019894">
    <property type="term" value="F:kinesin binding"/>
    <property type="evidence" value="ECO:0007669"/>
    <property type="project" value="TreeGrafter"/>
</dbReference>
<dbReference type="GO" id="GO:0007155">
    <property type="term" value="P:cell adhesion"/>
    <property type="evidence" value="ECO:0000250"/>
    <property type="project" value="UniProtKB"/>
</dbReference>
<dbReference type="GO" id="GO:0061077">
    <property type="term" value="P:chaperone-mediated protein folding"/>
    <property type="evidence" value="ECO:0000250"/>
    <property type="project" value="UniProtKB"/>
</dbReference>
<dbReference type="GO" id="GO:0036503">
    <property type="term" value="P:ERAD pathway"/>
    <property type="evidence" value="ECO:0000250"/>
    <property type="project" value="UniProtKB"/>
</dbReference>
<dbReference type="GO" id="GO:0045104">
    <property type="term" value="P:intermediate filament cytoskeleton organization"/>
    <property type="evidence" value="ECO:0000250"/>
    <property type="project" value="UniProtKB"/>
</dbReference>
<dbReference type="GO" id="GO:0031175">
    <property type="term" value="P:neuron projection development"/>
    <property type="evidence" value="ECO:0000250"/>
    <property type="project" value="UniProtKB"/>
</dbReference>
<dbReference type="GO" id="GO:0006998">
    <property type="term" value="P:nuclear envelope organization"/>
    <property type="evidence" value="ECO:0000250"/>
    <property type="project" value="UniProtKB"/>
</dbReference>
<dbReference type="GO" id="GO:0071763">
    <property type="term" value="P:nuclear membrane organization"/>
    <property type="evidence" value="ECO:0000250"/>
    <property type="project" value="UniProtKB"/>
</dbReference>
<dbReference type="GO" id="GO:0006996">
    <property type="term" value="P:organelle organization"/>
    <property type="evidence" value="ECO:0000250"/>
    <property type="project" value="UniProtKB"/>
</dbReference>
<dbReference type="GO" id="GO:1900244">
    <property type="term" value="P:positive regulation of synaptic vesicle endocytosis"/>
    <property type="evidence" value="ECO:0000250"/>
    <property type="project" value="UniProtKB"/>
</dbReference>
<dbReference type="GO" id="GO:0000338">
    <property type="term" value="P:protein deneddylation"/>
    <property type="evidence" value="ECO:0000250"/>
    <property type="project" value="UniProtKB"/>
</dbReference>
<dbReference type="GO" id="GO:0034504">
    <property type="term" value="P:protein localization to nucleus"/>
    <property type="evidence" value="ECO:0000250"/>
    <property type="project" value="UniProtKB"/>
</dbReference>
<dbReference type="GO" id="GO:0051584">
    <property type="term" value="P:regulation of dopamine uptake involved in synaptic transmission"/>
    <property type="evidence" value="ECO:0000250"/>
    <property type="project" value="UniProtKB"/>
</dbReference>
<dbReference type="GO" id="GO:2000008">
    <property type="term" value="P:regulation of protein localization to cell surface"/>
    <property type="evidence" value="ECO:0000250"/>
    <property type="project" value="UniProtKB"/>
</dbReference>
<dbReference type="GO" id="GO:0048489">
    <property type="term" value="P:synaptic vesicle transport"/>
    <property type="evidence" value="ECO:0000250"/>
    <property type="project" value="UniProtKB"/>
</dbReference>
<dbReference type="GO" id="GO:0044319">
    <property type="term" value="P:wound healing, spreading of cells"/>
    <property type="evidence" value="ECO:0000250"/>
    <property type="project" value="UniProtKB"/>
</dbReference>
<dbReference type="FunFam" id="3.40.50.300:FF:000743">
    <property type="entry name" value="Torsin"/>
    <property type="match status" value="1"/>
</dbReference>
<dbReference type="Gene3D" id="3.40.50.300">
    <property type="entry name" value="P-loop containing nucleotide triphosphate hydrolases"/>
    <property type="match status" value="1"/>
</dbReference>
<dbReference type="InterPro" id="IPR001270">
    <property type="entry name" value="ClpA/B"/>
</dbReference>
<dbReference type="InterPro" id="IPR027417">
    <property type="entry name" value="P-loop_NTPase"/>
</dbReference>
<dbReference type="InterPro" id="IPR049337">
    <property type="entry name" value="TOR1A_C"/>
</dbReference>
<dbReference type="InterPro" id="IPR010448">
    <property type="entry name" value="Torsin"/>
</dbReference>
<dbReference type="PANTHER" id="PTHR10760">
    <property type="entry name" value="TORSIN"/>
    <property type="match status" value="1"/>
</dbReference>
<dbReference type="PANTHER" id="PTHR10760:SF15">
    <property type="entry name" value="TORSIN-1A"/>
    <property type="match status" value="1"/>
</dbReference>
<dbReference type="Pfam" id="PF21376">
    <property type="entry name" value="TOR1A_C"/>
    <property type="match status" value="1"/>
</dbReference>
<dbReference type="Pfam" id="PF06309">
    <property type="entry name" value="Torsin"/>
    <property type="match status" value="1"/>
</dbReference>
<dbReference type="PRINTS" id="PR00300">
    <property type="entry name" value="CLPPROTEASEA"/>
</dbReference>
<dbReference type="SUPFAM" id="SSF52540">
    <property type="entry name" value="P-loop containing nucleoside triphosphate hydrolases"/>
    <property type="match status" value="1"/>
</dbReference>
<proteinExistence type="evidence at transcript level"/>
<protein>
    <recommendedName>
        <fullName>Torsin-1A</fullName>
    </recommendedName>
    <alternativeName>
        <fullName>Dystonia 1 protein</fullName>
    </alternativeName>
    <alternativeName>
        <fullName>Torsin ATPase 1</fullName>
        <ecNumber>3.6.4.-</ecNumber>
    </alternativeName>
    <alternativeName>
        <fullName>Torsin family 1 member A</fullName>
    </alternativeName>
</protein>
<sequence>AECCGQKRSLSREALQKDLDDKLFGQHLAKKVILNAVSGFLSNPKPKKPLTLSLHGWTGTGKNFASKIIAENIYEGGLNSDYVHLFVATLHFPHASNVTLYKDQLQMWIRGNVSACARSIFIFDEMDKMHAGLIDAIKPFLDYYDVVDEVSYQKAIFIFLSNAGAERITDVALDFWKSGKQREEIKLRDMEHALAVSVFNNKNSGFWHSSLIDRNLIDYFVPFLPLEYKHLKMCIRVEMQSRGYEVDEDIISKVAEEMTFFPKEERVFSDKGC</sequence>
<keyword id="KW-0067">ATP-binding</keyword>
<keyword id="KW-0966">Cell projection</keyword>
<keyword id="KW-0143">Chaperone</keyword>
<keyword id="KW-0963">Cytoplasm</keyword>
<keyword id="KW-0968">Cytoplasmic vesicle</keyword>
<keyword id="KW-0206">Cytoskeleton</keyword>
<keyword id="KW-0256">Endoplasmic reticulum</keyword>
<keyword id="KW-0325">Glycoprotein</keyword>
<keyword id="KW-0378">Hydrolase</keyword>
<keyword id="KW-0472">Membrane</keyword>
<keyword id="KW-0547">Nucleotide-binding</keyword>
<keyword id="KW-0539">Nucleus</keyword>
<keyword id="KW-0770">Synapse</keyword>
<keyword id="KW-0771">Synaptosome</keyword>